<keyword id="KW-0143">Chaperone</keyword>
<keyword id="KW-0903">Direct protein sequencing</keyword>
<keyword id="KW-1185">Reference proteome</keyword>
<keyword id="KW-0346">Stress response</keyword>
<accession>P77527</accession>
<accession>Q5SI86</accession>
<proteinExistence type="evidence at protein level"/>
<dbReference type="EMBL" id="Y07826">
    <property type="protein sequence ID" value="CAA69162.1"/>
    <property type="molecule type" value="Genomic_DNA"/>
</dbReference>
<dbReference type="EMBL" id="D84222">
    <property type="protein sequence ID" value="BAA12283.1"/>
    <property type="molecule type" value="Genomic_DNA"/>
</dbReference>
<dbReference type="EMBL" id="AB012390">
    <property type="protein sequence ID" value="BAA81744.1"/>
    <property type="molecule type" value="Genomic_DNA"/>
</dbReference>
<dbReference type="EMBL" id="AB032368">
    <property type="protein sequence ID" value="BAA96086.1"/>
    <property type="molecule type" value="Genomic_DNA"/>
</dbReference>
<dbReference type="EMBL" id="AP008226">
    <property type="protein sequence ID" value="BAD71311.1"/>
    <property type="molecule type" value="Genomic_DNA"/>
</dbReference>
<dbReference type="RefSeq" id="WP_011173538.1">
    <property type="nucleotide sequence ID" value="NC_006461.1"/>
</dbReference>
<dbReference type="RefSeq" id="YP_144754.1">
    <property type="nucleotide sequence ID" value="NC_006461.1"/>
</dbReference>
<dbReference type="SMR" id="P77527"/>
<dbReference type="EnsemblBacteria" id="BAD71311">
    <property type="protein sequence ID" value="BAD71311"/>
    <property type="gene ID" value="BAD71311"/>
</dbReference>
<dbReference type="GeneID" id="3167983"/>
<dbReference type="KEGG" id="ttj:TTHA1488"/>
<dbReference type="PATRIC" id="fig|300852.9.peg.1463"/>
<dbReference type="eggNOG" id="COG0789">
    <property type="taxonomic scope" value="Bacteria"/>
</dbReference>
<dbReference type="HOGENOM" id="CLU_2585537_0_0_0"/>
<dbReference type="Proteomes" id="UP000000532">
    <property type="component" value="Chromosome"/>
</dbReference>
<dbReference type="Gene3D" id="1.10.1660.10">
    <property type="match status" value="1"/>
</dbReference>
<dbReference type="InterPro" id="IPR009061">
    <property type="entry name" value="DNA-bd_dom_put_sf"/>
</dbReference>
<dbReference type="Pfam" id="PF13591">
    <property type="entry name" value="MerR_2"/>
    <property type="match status" value="1"/>
</dbReference>
<dbReference type="SUPFAM" id="SSF46955">
    <property type="entry name" value="Putative DNA-binding domain"/>
    <property type="match status" value="1"/>
</dbReference>
<organism>
    <name type="scientific">Thermus thermophilus (strain ATCC 27634 / DSM 579 / HB8)</name>
    <dbReference type="NCBI Taxonomy" id="300852"/>
    <lineage>
        <taxon>Bacteria</taxon>
        <taxon>Thermotogati</taxon>
        <taxon>Deinococcota</taxon>
        <taxon>Deinococci</taxon>
        <taxon>Thermales</taxon>
        <taxon>Thermaceae</taxon>
        <taxon>Thermus</taxon>
    </lineage>
</organism>
<feature type="chain" id="PRO_0000079774" description="Protein DafA">
    <location>
        <begin position="1"/>
        <end position="78"/>
    </location>
</feature>
<name>DAFA_THET8</name>
<reference key="1">
    <citation type="submission" date="1996-09" db="EMBL/GenBank/DDBJ databases">
        <authorList>
            <person name="Seidel R."/>
        </authorList>
    </citation>
    <scope>NUCLEOTIDE SEQUENCE [GENOMIC DNA]</scope>
</reference>
<reference key="2">
    <citation type="journal article" date="1996" name="J. Biol. Chem.">
        <title>A novel factor required for the assembly of the DnaK and DnaJ chaperones of Thermus thermophilus.</title>
        <authorList>
            <person name="Motohashi K."/>
            <person name="Yohda M."/>
            <person name="Endo I."/>
            <person name="Yoshida M."/>
        </authorList>
    </citation>
    <scope>NUCLEOTIDE SEQUENCE [GENOMIC DNA]</scope>
    <scope>PROTEIN SEQUENCE OF 52-63</scope>
    <scope>CHARACTERIZATION</scope>
</reference>
<reference key="3">
    <citation type="submission" date="2004-11" db="EMBL/GenBank/DDBJ databases">
        <title>Complete genome sequence of Thermus thermophilus HB8.</title>
        <authorList>
            <person name="Masui R."/>
            <person name="Kurokawa K."/>
            <person name="Nakagawa N."/>
            <person name="Tokunaga F."/>
            <person name="Koyama Y."/>
            <person name="Shibata T."/>
            <person name="Oshima T."/>
            <person name="Yokoyama S."/>
            <person name="Yasunaga T."/>
            <person name="Kuramitsu S."/>
        </authorList>
    </citation>
    <scope>NUCLEOTIDE SEQUENCE [LARGE SCALE GENOMIC DNA]</scope>
    <source>
        <strain>ATCC 27634 / DSM 579 / HB8</strain>
    </source>
</reference>
<reference key="4">
    <citation type="journal article" date="1999" name="J. Mol. Biol.">
        <title>The functional cycle and regulation of the Thermus thermophilus DnaK chaperone system.</title>
        <authorList>
            <person name="Klostermeier D."/>
            <person name="Seidel R."/>
            <person name="Reinstein J."/>
        </authorList>
    </citation>
    <scope>INVOLVEMENT IN DNAK CHAPERONE SYSTEM</scope>
</reference>
<comment type="function">
    <text>Required for correct assembly of the DnaK-DnaJ complex in the resting state. Seems to stabilize this ternary complex until it is replaced by substrate proteins under heat-shock conditions.</text>
</comment>
<comment type="subunit">
    <text>Forms a heterononamer with DnaK and DnaJ. Three copies of each protein are present in the complex.</text>
</comment>
<comment type="PTM">
    <text evidence="1">The N-terminus is blocked.</text>
</comment>
<gene>
    <name type="primary">dafA</name>
    <name type="ordered locus">TTHA1488</name>
</gene>
<sequence length="78" mass="8668">MLARSGWLSLEALSEYGLSLAAVRAYVEIGFVEPLEVGGAWYFREEDLLRMAKAERIRKDLGANLIGAALVVEILERT</sequence>
<protein>
    <recommendedName>
        <fullName>Protein DafA</fullName>
    </recommendedName>
    <alternativeName>
        <fullName>DnaK-DnaJ assembly factor A</fullName>
    </alternativeName>
</protein>
<evidence type="ECO:0000305" key="1"/>